<gene>
    <name type="primary">clpP</name>
</gene>
<comment type="function">
    <text evidence="1">Cleaves peptides in various proteins in a process that requires ATP hydrolysis. Has a chymotrypsin-like activity. Plays a major role in the degradation of misfolded proteins (By similarity).</text>
</comment>
<comment type="catalytic activity">
    <reaction>
        <text>Hydrolysis of proteins to small peptides in the presence of ATP and magnesium. alpha-casein is the usual test substrate. In the absence of ATP, only oligopeptides shorter than five residues are hydrolyzed (such as succinyl-Leu-Tyr-|-NHMec, and Leu-Tyr-Leu-|-Tyr-Trp, in which cleavage of the -Tyr-|-Leu- and -Tyr-|-Trp bonds also occurs).</text>
        <dbReference type="EC" id="3.4.21.92"/>
    </reaction>
</comment>
<comment type="subunit">
    <text>Component of the chloroplastic Clp protease core complex.</text>
</comment>
<comment type="subcellular location">
    <subcellularLocation>
        <location>Plastid</location>
    </subcellularLocation>
</comment>
<comment type="similarity">
    <text evidence="2">Belongs to the peptidase S14 family.</text>
</comment>
<proteinExistence type="inferred from homology"/>
<sequence length="196" mass="22110">MPIGVPKVPFQIPGEEDASWVDVYNRLYRERLLFLGQEVDSDISNQLIGLMVYLSIEDDTKEIYLFINSPGGWVIPGVAIYDTMQFVRPEVHTICMGLAASMGSFLLVGGEITKRLAFPHARVMIHQPASYFFGAQTGEFILEAEELLKLRETLTRVYVQRTGKPLWVISEDMERDVFMSAKDAQAYGIVDLVAVE</sequence>
<keyword id="KW-0378">Hydrolase</keyword>
<keyword id="KW-0934">Plastid</keyword>
<keyword id="KW-0645">Protease</keyword>
<keyword id="KW-0720">Serine protease</keyword>
<geneLocation type="non-photosynthetic plastid"/>
<protein>
    <recommendedName>
        <fullName>ATP-dependent Clp protease proteolytic subunit</fullName>
        <ecNumber>3.4.21.92</ecNumber>
    </recommendedName>
    <alternativeName>
        <fullName>Endopeptidase Clp</fullName>
    </alternativeName>
</protein>
<accession>P30063</accession>
<name>CLPP_EPIVI</name>
<reference key="1">
    <citation type="journal article" date="1992" name="Proc. Natl. Acad. Sci. U.S.A.">
        <title>Function and evolution of a minimal plastid genome from a nonphotosynthetic parasitic plant.</title>
        <authorList>
            <person name="Wolfe K.H."/>
            <person name="Morden C.W."/>
            <person name="Palmer J.D."/>
        </authorList>
    </citation>
    <scope>NUCLEOTIDE SEQUENCE [LARGE SCALE GENOMIC DNA]</scope>
</reference>
<reference key="2">
    <citation type="journal article" date="1992" name="J. Mol. Evol.">
        <title>Rapid evolution of the plastid translational apparatus in a nonphotosynthetic plant: loss or accelerated sequence evolution of tRNA and ribosomal protein genes.</title>
        <authorList>
            <person name="Wolfe K.H."/>
            <person name="Morden C.W."/>
            <person name="Ems S.C."/>
            <person name="Palmer J.D."/>
        </authorList>
    </citation>
    <scope>NUCLEOTIDE SEQUENCE [GENOMIC DNA]</scope>
</reference>
<evidence type="ECO:0000250" key="1"/>
<evidence type="ECO:0000305" key="2"/>
<dbReference type="EC" id="3.4.21.92"/>
<dbReference type="EMBL" id="M81884">
    <property type="protein sequence ID" value="AAA65858.1"/>
    <property type="molecule type" value="Genomic_DNA"/>
</dbReference>
<dbReference type="PIR" id="S78388">
    <property type="entry name" value="S78388"/>
</dbReference>
<dbReference type="RefSeq" id="NP_054384.1">
    <property type="nucleotide sequence ID" value="NC_001568.1"/>
</dbReference>
<dbReference type="SMR" id="P30063"/>
<dbReference type="MEROPS" id="S14.002"/>
<dbReference type="GeneID" id="801415"/>
<dbReference type="BRENDA" id="3.4.21.92">
    <property type="organism ID" value="6977"/>
</dbReference>
<dbReference type="GO" id="GO:0009368">
    <property type="term" value="C:endopeptidase Clp complex"/>
    <property type="evidence" value="ECO:0007669"/>
    <property type="project" value="TreeGrafter"/>
</dbReference>
<dbReference type="GO" id="GO:0009532">
    <property type="term" value="C:plastid stroma"/>
    <property type="evidence" value="ECO:0007669"/>
    <property type="project" value="UniProtKB-ARBA"/>
</dbReference>
<dbReference type="GO" id="GO:0004176">
    <property type="term" value="F:ATP-dependent peptidase activity"/>
    <property type="evidence" value="ECO:0007669"/>
    <property type="project" value="InterPro"/>
</dbReference>
<dbReference type="GO" id="GO:0051117">
    <property type="term" value="F:ATPase binding"/>
    <property type="evidence" value="ECO:0007669"/>
    <property type="project" value="TreeGrafter"/>
</dbReference>
<dbReference type="GO" id="GO:0004252">
    <property type="term" value="F:serine-type endopeptidase activity"/>
    <property type="evidence" value="ECO:0007669"/>
    <property type="project" value="UniProtKB-UniRule"/>
</dbReference>
<dbReference type="GO" id="GO:0006515">
    <property type="term" value="P:protein quality control for misfolded or incompletely synthesized proteins"/>
    <property type="evidence" value="ECO:0007669"/>
    <property type="project" value="TreeGrafter"/>
</dbReference>
<dbReference type="CDD" id="cd07017">
    <property type="entry name" value="S14_ClpP_2"/>
    <property type="match status" value="1"/>
</dbReference>
<dbReference type="FunFam" id="3.90.226.10:FF:000006">
    <property type="entry name" value="ATP-dependent Clp protease proteolytic subunit"/>
    <property type="match status" value="1"/>
</dbReference>
<dbReference type="Gene3D" id="3.90.226.10">
    <property type="entry name" value="2-enoyl-CoA Hydratase, Chain A, domain 1"/>
    <property type="match status" value="1"/>
</dbReference>
<dbReference type="HAMAP" id="MF_00444">
    <property type="entry name" value="ClpP"/>
    <property type="match status" value="1"/>
</dbReference>
<dbReference type="InterPro" id="IPR001907">
    <property type="entry name" value="ClpP"/>
</dbReference>
<dbReference type="InterPro" id="IPR029045">
    <property type="entry name" value="ClpP/crotonase-like_dom_sf"/>
</dbReference>
<dbReference type="InterPro" id="IPR023562">
    <property type="entry name" value="ClpP/TepA"/>
</dbReference>
<dbReference type="InterPro" id="IPR033135">
    <property type="entry name" value="ClpP_His_AS"/>
</dbReference>
<dbReference type="InterPro" id="IPR018215">
    <property type="entry name" value="ClpP_Ser_AS"/>
</dbReference>
<dbReference type="PANTHER" id="PTHR10381">
    <property type="entry name" value="ATP-DEPENDENT CLP PROTEASE PROTEOLYTIC SUBUNIT"/>
    <property type="match status" value="1"/>
</dbReference>
<dbReference type="PANTHER" id="PTHR10381:SF15">
    <property type="entry name" value="CHLOROPLASTIC ATP-DEPENDENT CLP PROTEASE PROTEOLYTIC SUBUNIT 1"/>
    <property type="match status" value="1"/>
</dbReference>
<dbReference type="Pfam" id="PF00574">
    <property type="entry name" value="CLP_protease"/>
    <property type="match status" value="1"/>
</dbReference>
<dbReference type="PRINTS" id="PR00127">
    <property type="entry name" value="CLPPROTEASEP"/>
</dbReference>
<dbReference type="SUPFAM" id="SSF52096">
    <property type="entry name" value="ClpP/crotonase"/>
    <property type="match status" value="1"/>
</dbReference>
<dbReference type="PROSITE" id="PS00382">
    <property type="entry name" value="CLP_PROTEASE_HIS"/>
    <property type="match status" value="1"/>
</dbReference>
<dbReference type="PROSITE" id="PS00381">
    <property type="entry name" value="CLP_PROTEASE_SER"/>
    <property type="match status" value="1"/>
</dbReference>
<organism>
    <name type="scientific">Epifagus virginiana</name>
    <name type="common">Beechdrops</name>
    <name type="synonym">Orobanche virginiana</name>
    <dbReference type="NCBI Taxonomy" id="4177"/>
    <lineage>
        <taxon>Eukaryota</taxon>
        <taxon>Viridiplantae</taxon>
        <taxon>Streptophyta</taxon>
        <taxon>Embryophyta</taxon>
        <taxon>Tracheophyta</taxon>
        <taxon>Spermatophyta</taxon>
        <taxon>Magnoliopsida</taxon>
        <taxon>eudicotyledons</taxon>
        <taxon>Gunneridae</taxon>
        <taxon>Pentapetalae</taxon>
        <taxon>asterids</taxon>
        <taxon>lamiids</taxon>
        <taxon>Lamiales</taxon>
        <taxon>Orobanchaceae</taxon>
        <taxon>Orobancheae</taxon>
        <taxon>Epifagus</taxon>
    </lineage>
</organism>
<feature type="chain" id="PRO_0000179739" description="ATP-dependent Clp protease proteolytic subunit">
    <location>
        <begin position="1"/>
        <end position="196"/>
    </location>
</feature>
<feature type="active site" description="Nucleophile" evidence="1">
    <location>
        <position position="101"/>
    </location>
</feature>
<feature type="active site" evidence="1">
    <location>
        <position position="126"/>
    </location>
</feature>